<dbReference type="EC" id="2.7.11.1" evidence="6"/>
<dbReference type="EMBL" id="AF080252">
    <property type="protein sequence ID" value="AAC29496.1"/>
    <property type="molecule type" value="mRNA"/>
</dbReference>
<dbReference type="EMBL" id="AF080253">
    <property type="protein sequence ID" value="AAC29497.1"/>
    <property type="molecule type" value="mRNA"/>
</dbReference>
<dbReference type="EMBL" id="AK032344">
    <property type="protein sequence ID" value="BAC27825.1"/>
    <property type="molecule type" value="mRNA"/>
</dbReference>
<dbReference type="EMBL" id="AK088230">
    <property type="protein sequence ID" value="BAC40225.1"/>
    <property type="molecule type" value="mRNA"/>
</dbReference>
<dbReference type="EMBL" id="AK088674">
    <property type="protein sequence ID" value="BAC40497.1"/>
    <property type="molecule type" value="mRNA"/>
</dbReference>
<dbReference type="EMBL" id="BC016676">
    <property type="protein sequence ID" value="AAH16676.1"/>
    <property type="molecule type" value="mRNA"/>
</dbReference>
<dbReference type="CCDS" id="CCDS26157.1">
    <molecule id="Q80X41-3"/>
</dbReference>
<dbReference type="CCDS" id="CCDS26158.1">
    <molecule id="Q80X41-2"/>
</dbReference>
<dbReference type="CCDS" id="CCDS36551.1">
    <molecule id="Q80X41-1"/>
</dbReference>
<dbReference type="RefSeq" id="NP_001025014.1">
    <molecule id="Q80X41-3"/>
    <property type="nucleotide sequence ID" value="NM_001029843.2"/>
</dbReference>
<dbReference type="RefSeq" id="NP_001025015.1">
    <molecule id="Q80X41-2"/>
    <property type="nucleotide sequence ID" value="NM_001029844.2"/>
</dbReference>
<dbReference type="RefSeq" id="NP_001351294.1">
    <molecule id="Q80X41-2"/>
    <property type="nucleotide sequence ID" value="NM_001364365.1"/>
</dbReference>
<dbReference type="RefSeq" id="NP_001351296.1">
    <molecule id="Q80X41-1"/>
    <property type="nucleotide sequence ID" value="NM_001364367.1"/>
</dbReference>
<dbReference type="RefSeq" id="NP_001351297.1">
    <molecule id="Q80X41-5"/>
    <property type="nucleotide sequence ID" value="NM_001364368.1"/>
</dbReference>
<dbReference type="RefSeq" id="NP_035835.1">
    <molecule id="Q80X41-1"/>
    <property type="nucleotide sequence ID" value="NM_011705.4"/>
</dbReference>
<dbReference type="RefSeq" id="XP_006515872.1">
    <molecule id="Q80X41-1"/>
    <property type="nucleotide sequence ID" value="XM_006515809.3"/>
</dbReference>
<dbReference type="RefSeq" id="XP_006515873.1">
    <molecule id="Q80X41-1"/>
    <property type="nucleotide sequence ID" value="XM_006515810.5"/>
</dbReference>
<dbReference type="RefSeq" id="XP_006515874.1">
    <molecule id="Q80X41-1"/>
    <property type="nucleotide sequence ID" value="XM_006515811.5"/>
</dbReference>
<dbReference type="RefSeq" id="XP_006515875.1">
    <property type="nucleotide sequence ID" value="XM_006515812.2"/>
</dbReference>
<dbReference type="RefSeq" id="XP_017170535.1">
    <property type="nucleotide sequence ID" value="XM_017315046.1"/>
</dbReference>
<dbReference type="RefSeq" id="XP_030102546.1">
    <molecule id="Q80X41-3"/>
    <property type="nucleotide sequence ID" value="XM_030246686.1"/>
</dbReference>
<dbReference type="RefSeq" id="XP_030102547.1">
    <molecule id="Q80X41-3"/>
    <property type="nucleotide sequence ID" value="XM_030246687.2"/>
</dbReference>
<dbReference type="RefSeq" id="XP_030102549.1">
    <molecule id="Q80X41-2"/>
    <property type="nucleotide sequence ID" value="XM_030246689.1"/>
</dbReference>
<dbReference type="RefSeq" id="XP_030102550.1">
    <molecule id="Q80X41-2"/>
    <property type="nucleotide sequence ID" value="XM_030246690.2"/>
</dbReference>
<dbReference type="RefSeq" id="XP_030102551.1">
    <molecule id="Q80X41-2"/>
    <property type="nucleotide sequence ID" value="XM_030246691.1"/>
</dbReference>
<dbReference type="RefSeq" id="XP_036013274.1">
    <molecule id="Q80X41-1"/>
    <property type="nucleotide sequence ID" value="XM_036157381.1"/>
</dbReference>
<dbReference type="RefSeq" id="XP_036013275.1">
    <molecule id="Q80X41-3"/>
    <property type="nucleotide sequence ID" value="XM_036157382.1"/>
</dbReference>
<dbReference type="RefSeq" id="XP_036013276.1">
    <molecule id="Q80X41-3"/>
    <property type="nucleotide sequence ID" value="XM_036157383.1"/>
</dbReference>
<dbReference type="SMR" id="Q80X41"/>
<dbReference type="BioGRID" id="204536">
    <property type="interactions" value="6"/>
</dbReference>
<dbReference type="FunCoup" id="Q80X41">
    <property type="interactions" value="5160"/>
</dbReference>
<dbReference type="IntAct" id="Q80X41">
    <property type="interactions" value="3"/>
</dbReference>
<dbReference type="MINT" id="Q80X41"/>
<dbReference type="STRING" id="10090.ENSMUSP00000152109"/>
<dbReference type="iPTMnet" id="Q80X41"/>
<dbReference type="PhosphoSitePlus" id="Q80X41"/>
<dbReference type="SwissPalm" id="Q80X41"/>
<dbReference type="jPOST" id="Q80X41"/>
<dbReference type="PaxDb" id="10090-ENSMUSP00000021539"/>
<dbReference type="ProteomicsDB" id="299728">
    <molecule id="Q80X41-1"/>
</dbReference>
<dbReference type="ProteomicsDB" id="299729">
    <molecule id="Q80X41-2"/>
</dbReference>
<dbReference type="ProteomicsDB" id="299730">
    <molecule id="Q80X41-3"/>
</dbReference>
<dbReference type="ProteomicsDB" id="299731">
    <molecule id="Q80X41-5"/>
</dbReference>
<dbReference type="Pumba" id="Q80X41"/>
<dbReference type="Antibodypedia" id="42">
    <property type="antibodies" value="278 antibodies from 36 providers"/>
</dbReference>
<dbReference type="DNASU" id="22367"/>
<dbReference type="Ensembl" id="ENSMUST00000021539.16">
    <molecule id="Q80X41-1"/>
    <property type="protein sequence ID" value="ENSMUSP00000021539.9"/>
    <property type="gene ID" value="ENSMUSG00000021115.16"/>
</dbReference>
<dbReference type="Ensembl" id="ENSMUST00000072040.7">
    <molecule id="Q80X41-2"/>
    <property type="protein sequence ID" value="ENSMUSP00000071922.6"/>
    <property type="gene ID" value="ENSMUSG00000021115.16"/>
</dbReference>
<dbReference type="Ensembl" id="ENSMUST00000085026.12">
    <molecule id="Q80X41-3"/>
    <property type="protein sequence ID" value="ENSMUSP00000082101.5"/>
    <property type="gene ID" value="ENSMUSG00000021115.16"/>
</dbReference>
<dbReference type="Ensembl" id="ENSMUST00000220629.2">
    <molecule id="Q80X41-1"/>
    <property type="protein sequence ID" value="ENSMUSP00000152109.2"/>
    <property type="gene ID" value="ENSMUSG00000021115.16"/>
</dbReference>
<dbReference type="GeneID" id="22367"/>
<dbReference type="KEGG" id="mmu:22367"/>
<dbReference type="UCSC" id="uc007ozb.1">
    <molecule id="Q80X41-1"/>
    <property type="organism name" value="mouse"/>
</dbReference>
<dbReference type="UCSC" id="uc007ozd.1">
    <molecule id="Q80X41-2"/>
    <property type="organism name" value="mouse"/>
</dbReference>
<dbReference type="UCSC" id="uc007oze.1">
    <molecule id="Q80X41-5"/>
    <property type="organism name" value="mouse"/>
</dbReference>
<dbReference type="AGR" id="MGI:1261847"/>
<dbReference type="CTD" id="7443"/>
<dbReference type="MGI" id="MGI:1261847">
    <property type="gene designation" value="Vrk1"/>
</dbReference>
<dbReference type="VEuPathDB" id="HostDB:ENSMUSG00000021115"/>
<dbReference type="eggNOG" id="KOG1164">
    <property type="taxonomic scope" value="Eukaryota"/>
</dbReference>
<dbReference type="GeneTree" id="ENSGT00940000155554"/>
<dbReference type="HOGENOM" id="CLU_019279_4_0_1"/>
<dbReference type="InParanoid" id="Q80X41"/>
<dbReference type="OMA" id="MHSTGYV"/>
<dbReference type="OrthoDB" id="2687620at2759"/>
<dbReference type="PhylomeDB" id="Q80X41"/>
<dbReference type="TreeFam" id="TF106473"/>
<dbReference type="Reactome" id="R-MMU-2980766">
    <property type="pathway name" value="Nuclear Envelope Breakdown"/>
</dbReference>
<dbReference type="Reactome" id="R-MMU-2995383">
    <property type="pathway name" value="Initiation of Nuclear Envelope (NE) Reformation"/>
</dbReference>
<dbReference type="BioGRID-ORCS" id="22367">
    <property type="hits" value="25 hits in 78 CRISPR screens"/>
</dbReference>
<dbReference type="ChiTaRS" id="Vrk1">
    <property type="organism name" value="mouse"/>
</dbReference>
<dbReference type="PRO" id="PR:Q80X41"/>
<dbReference type="Proteomes" id="UP000000589">
    <property type="component" value="Chromosome 12"/>
</dbReference>
<dbReference type="RNAct" id="Q80X41">
    <property type="molecule type" value="protein"/>
</dbReference>
<dbReference type="Bgee" id="ENSMUSG00000021115">
    <property type="expression patterns" value="Expressed in granulocyte and 226 other cell types or tissues"/>
</dbReference>
<dbReference type="ExpressionAtlas" id="Q80X41">
    <property type="expression patterns" value="baseline and differential"/>
</dbReference>
<dbReference type="GO" id="GO:0015030">
    <property type="term" value="C:Cajal body"/>
    <property type="evidence" value="ECO:0000250"/>
    <property type="project" value="UniProtKB"/>
</dbReference>
<dbReference type="GO" id="GO:0000785">
    <property type="term" value="C:chromatin"/>
    <property type="evidence" value="ECO:0000250"/>
    <property type="project" value="UniProtKB"/>
</dbReference>
<dbReference type="GO" id="GO:0005829">
    <property type="term" value="C:cytosol"/>
    <property type="evidence" value="ECO:0007669"/>
    <property type="project" value="Ensembl"/>
</dbReference>
<dbReference type="GO" id="GO:0005795">
    <property type="term" value="C:Golgi stack"/>
    <property type="evidence" value="ECO:0000250"/>
    <property type="project" value="UniProtKB"/>
</dbReference>
<dbReference type="GO" id="GO:0005730">
    <property type="term" value="C:nucleolus"/>
    <property type="evidence" value="ECO:0007669"/>
    <property type="project" value="Ensembl"/>
</dbReference>
<dbReference type="GO" id="GO:0005634">
    <property type="term" value="C:nucleus"/>
    <property type="evidence" value="ECO:0000314"/>
    <property type="project" value="MGI"/>
</dbReference>
<dbReference type="GO" id="GO:0005524">
    <property type="term" value="F:ATP binding"/>
    <property type="evidence" value="ECO:0007669"/>
    <property type="project" value="UniProtKB-KW"/>
</dbReference>
<dbReference type="GO" id="GO:0042393">
    <property type="term" value="F:histone binding"/>
    <property type="evidence" value="ECO:0007669"/>
    <property type="project" value="Ensembl"/>
</dbReference>
<dbReference type="GO" id="GO:0141003">
    <property type="term" value="F:histone H2AX kinase activity"/>
    <property type="evidence" value="ECO:0000250"/>
    <property type="project" value="UniProtKB"/>
</dbReference>
<dbReference type="GO" id="GO:0035175">
    <property type="term" value="F:histone H3S10 kinase activity"/>
    <property type="evidence" value="ECO:0007669"/>
    <property type="project" value="Ensembl"/>
</dbReference>
<dbReference type="GO" id="GO:0072354">
    <property type="term" value="F:histone H3T3 kinase activity"/>
    <property type="evidence" value="ECO:0007669"/>
    <property type="project" value="Ensembl"/>
</dbReference>
<dbReference type="GO" id="GO:0031492">
    <property type="term" value="F:nucleosomal DNA binding"/>
    <property type="evidence" value="ECO:0000250"/>
    <property type="project" value="UniProtKB"/>
</dbReference>
<dbReference type="GO" id="GO:0019901">
    <property type="term" value="F:protein kinase binding"/>
    <property type="evidence" value="ECO:0000266"/>
    <property type="project" value="MGI"/>
</dbReference>
<dbReference type="GO" id="GO:0106310">
    <property type="term" value="F:protein serine kinase activity"/>
    <property type="evidence" value="ECO:0007669"/>
    <property type="project" value="RHEA"/>
</dbReference>
<dbReference type="GO" id="GO:0004674">
    <property type="term" value="F:protein serine/threonine kinase activity"/>
    <property type="evidence" value="ECO:0000314"/>
    <property type="project" value="UniProtKB"/>
</dbReference>
<dbReference type="GO" id="GO:0030576">
    <property type="term" value="P:Cajal body organization"/>
    <property type="evidence" value="ECO:0000250"/>
    <property type="project" value="UniProtKB"/>
</dbReference>
<dbReference type="GO" id="GO:0051301">
    <property type="term" value="P:cell division"/>
    <property type="evidence" value="ECO:0007669"/>
    <property type="project" value="UniProtKB-KW"/>
</dbReference>
<dbReference type="GO" id="GO:0006338">
    <property type="term" value="P:chromatin remodeling"/>
    <property type="evidence" value="ECO:0000250"/>
    <property type="project" value="UniProtKB"/>
</dbReference>
<dbReference type="GO" id="GO:0006974">
    <property type="term" value="P:DNA damage response"/>
    <property type="evidence" value="ECO:0000250"/>
    <property type="project" value="UniProtKB"/>
</dbReference>
<dbReference type="GO" id="GO:0090166">
    <property type="term" value="P:Golgi disassembly"/>
    <property type="evidence" value="ECO:0000250"/>
    <property type="project" value="UniProtKB"/>
</dbReference>
<dbReference type="GO" id="GO:0031175">
    <property type="term" value="P:neuron projection development"/>
    <property type="evidence" value="ECO:0000250"/>
    <property type="project" value="UniProtKB"/>
</dbReference>
<dbReference type="GO" id="GO:0120187">
    <property type="term" value="P:positive regulation of protein localization to chromatin"/>
    <property type="evidence" value="ECO:0000250"/>
    <property type="project" value="UniProtKB"/>
</dbReference>
<dbReference type="GO" id="GO:2001222">
    <property type="term" value="P:regulation of neuron migration"/>
    <property type="evidence" value="ECO:0000315"/>
    <property type="project" value="UniProtKB"/>
</dbReference>
<dbReference type="CDD" id="cd14122">
    <property type="entry name" value="STKc_VRK1"/>
    <property type="match status" value="1"/>
</dbReference>
<dbReference type="FunFam" id="1.10.510.10:FF:000348">
    <property type="entry name" value="serine/threonine-protein kinase VRK1 isoform X1"/>
    <property type="match status" value="1"/>
</dbReference>
<dbReference type="Gene3D" id="1.10.510.10">
    <property type="entry name" value="Transferase(Phosphotransferase) domain 1"/>
    <property type="match status" value="1"/>
</dbReference>
<dbReference type="InterPro" id="IPR050235">
    <property type="entry name" value="CK1_Ser-Thr_kinase"/>
</dbReference>
<dbReference type="InterPro" id="IPR011009">
    <property type="entry name" value="Kinase-like_dom_sf"/>
</dbReference>
<dbReference type="InterPro" id="IPR000719">
    <property type="entry name" value="Prot_kinase_dom"/>
</dbReference>
<dbReference type="InterPro" id="IPR017441">
    <property type="entry name" value="Protein_kinase_ATP_BS"/>
</dbReference>
<dbReference type="InterPro" id="IPR008271">
    <property type="entry name" value="Ser/Thr_kinase_AS"/>
</dbReference>
<dbReference type="PANTHER" id="PTHR11909">
    <property type="entry name" value="CASEIN KINASE-RELATED"/>
    <property type="match status" value="1"/>
</dbReference>
<dbReference type="Pfam" id="PF00069">
    <property type="entry name" value="Pkinase"/>
    <property type="match status" value="1"/>
</dbReference>
<dbReference type="SMART" id="SM00220">
    <property type="entry name" value="S_TKc"/>
    <property type="match status" value="1"/>
</dbReference>
<dbReference type="SUPFAM" id="SSF56112">
    <property type="entry name" value="Protein kinase-like (PK-like)"/>
    <property type="match status" value="1"/>
</dbReference>
<dbReference type="PROSITE" id="PS00107">
    <property type="entry name" value="PROTEIN_KINASE_ATP"/>
    <property type="match status" value="1"/>
</dbReference>
<dbReference type="PROSITE" id="PS50011">
    <property type="entry name" value="PROTEIN_KINASE_DOM"/>
    <property type="match status" value="1"/>
</dbReference>
<dbReference type="PROSITE" id="PS00108">
    <property type="entry name" value="PROTEIN_KINASE_ST"/>
    <property type="match status" value="1"/>
</dbReference>
<keyword id="KW-0025">Alternative splicing</keyword>
<keyword id="KW-0067">ATP-binding</keyword>
<keyword id="KW-0131">Cell cycle</keyword>
<keyword id="KW-0132">Cell division</keyword>
<keyword id="KW-0963">Cytoplasm</keyword>
<keyword id="KW-0903">Direct protein sequencing</keyword>
<keyword id="KW-1017">Isopeptide bond</keyword>
<keyword id="KW-0418">Kinase</keyword>
<keyword id="KW-0498">Mitosis</keyword>
<keyword id="KW-0547">Nucleotide-binding</keyword>
<keyword id="KW-0539">Nucleus</keyword>
<keyword id="KW-0597">Phosphoprotein</keyword>
<keyword id="KW-1185">Reference proteome</keyword>
<keyword id="KW-0723">Serine/threonine-protein kinase</keyword>
<keyword id="KW-0808">Transferase</keyword>
<keyword id="KW-0832">Ubl conjugation</keyword>
<protein>
    <recommendedName>
        <fullName evidence="17">Serine/threonine-protein kinase VRK1</fullName>
        <ecNumber evidence="6">2.7.11.1</ecNumber>
    </recommendedName>
    <alternativeName>
        <fullName evidence="16">Serine/threonine-protein kinase 51PK</fullName>
    </alternativeName>
    <alternativeName>
        <fullName evidence="13">Vaccinia-related kinase 1</fullName>
    </alternativeName>
</protein>
<feature type="chain" id="PRO_0000086804" description="Serine/threonine-protein kinase VRK1">
    <location>
        <begin position="1"/>
        <end position="440"/>
    </location>
</feature>
<feature type="domain" description="Protein kinase" evidence="2">
    <location>
        <begin position="37"/>
        <end position="317"/>
    </location>
</feature>
<feature type="region of interest" description="Disordered" evidence="4">
    <location>
        <begin position="379"/>
        <end position="440"/>
    </location>
</feature>
<feature type="compositionally biased region" description="Polar residues" evidence="4">
    <location>
        <begin position="379"/>
        <end position="391"/>
    </location>
</feature>
<feature type="compositionally biased region" description="Polar residues" evidence="4">
    <location>
        <begin position="398"/>
        <end position="410"/>
    </location>
</feature>
<feature type="active site" description="Proton acceptor" evidence="2 3">
    <location>
        <position position="177"/>
    </location>
</feature>
<feature type="binding site" evidence="2">
    <location>
        <begin position="43"/>
        <end position="51"/>
    </location>
    <ligand>
        <name>ATP</name>
        <dbReference type="ChEBI" id="CHEBI:30616"/>
    </ligand>
</feature>
<feature type="binding site" evidence="2">
    <location>
        <position position="71"/>
    </location>
    <ligand>
        <name>ATP</name>
        <dbReference type="ChEBI" id="CHEBI:30616"/>
    </ligand>
</feature>
<feature type="modified residue" description="Phosphoserine; by PLK3" evidence="1">
    <location>
        <position position="342"/>
    </location>
</feature>
<feature type="modified residue" description="Phosphoserine" evidence="1">
    <location>
        <position position="376"/>
    </location>
</feature>
<feature type="modified residue" description="Phosphothreonine" evidence="1">
    <location>
        <position position="378"/>
    </location>
</feature>
<feature type="cross-link" description="Glycyl lysine isopeptide (Lys-Gly) (interchain with G-Cter in SUMO2)" evidence="1">
    <location>
        <position position="71"/>
    </location>
</feature>
<feature type="splice variant" id="VSP_008528" description="In isoform 5." evidence="15">
    <location>
        <begin position="125"/>
        <end position="126"/>
    </location>
</feature>
<feature type="splice variant" id="VSP_008529" description="In isoform 2." evidence="14">
    <location>
        <begin position="388"/>
        <end position="431"/>
    </location>
</feature>
<feature type="splice variant" id="VSP_008532" description="In isoform 3 and isoform 5." evidence="15 16">
    <location>
        <begin position="388"/>
        <end position="411"/>
    </location>
</feature>
<feature type="mutagenesis site" description="Results in defective assembly of Cajal bodies." evidence="8">
    <original>G</original>
    <variation>R</variation>
    <location>
        <position position="135"/>
    </location>
</feature>
<feature type="mutagenesis site" description="Abolished protein serine/threonine kinase activity. Results in impaired Cajal bodies assembly." evidence="8 10 11">
    <original>K</original>
    <variation>E</variation>
    <location>
        <position position="179"/>
    </location>
</feature>
<feature type="mutagenesis site" description="Results in impaired Cajal bodies assembly." evidence="9">
    <original>Y</original>
    <variation>H</variation>
    <location>
        <position position="213"/>
    </location>
</feature>
<feature type="mutagenesis site" description="Results in impaired Cajal bodies assembly." evidence="11">
    <original>D</original>
    <variation>G</variation>
    <location>
        <position position="263"/>
    </location>
</feature>
<feature type="region of interest" description="Required for interaction with the nucleosome" evidence="1">
    <location sequence="Q80X41-2">
        <begin position="387"/>
        <end position="393"/>
    </location>
</feature>
<accession>Q80X41</accession>
<accession>O88635</accession>
<accession>O88636</accession>
<accession>Q8C2P7</accession>
<accession>Q91YH9</accession>
<gene>
    <name evidence="13 18" type="primary">Vrk1</name>
</gene>
<reference key="1">
    <citation type="journal article" date="1998" name="Arch. Biochem. Biophys.">
        <title>Molecular cloning and characterization of a novel nuclear protein kinase in mice.</title>
        <authorList>
            <person name="Zelko I.N."/>
            <person name="Kobayashi R."/>
            <person name="Honkakoski P."/>
            <person name="Negishi M."/>
        </authorList>
    </citation>
    <scope>NUCLEOTIDE SEQUENCE [MRNA] (ISOFORMS 1 AND 3)</scope>
    <scope>PROTEIN SEQUENCE OF 19-33; 267-275 AND 278-288</scope>
    <scope>FUNCTION</scope>
    <scope>SUBCELLULAR LOCATION</scope>
    <scope>TISSUE SPECIFICITY</scope>
    <scope>AUTOPHOSPHORYLATION</scope>
    <source>
        <tissue>Testis</tissue>
    </source>
</reference>
<reference key="2">
    <citation type="journal article" date="2005" name="Science">
        <title>The transcriptional landscape of the mammalian genome.</title>
        <authorList>
            <person name="Carninci P."/>
            <person name="Kasukawa T."/>
            <person name="Katayama S."/>
            <person name="Gough J."/>
            <person name="Frith M.C."/>
            <person name="Maeda N."/>
            <person name="Oyama R."/>
            <person name="Ravasi T."/>
            <person name="Lenhard B."/>
            <person name="Wells C."/>
            <person name="Kodzius R."/>
            <person name="Shimokawa K."/>
            <person name="Bajic V.B."/>
            <person name="Brenner S.E."/>
            <person name="Batalov S."/>
            <person name="Forrest A.R."/>
            <person name="Zavolan M."/>
            <person name="Davis M.J."/>
            <person name="Wilming L.G."/>
            <person name="Aidinis V."/>
            <person name="Allen J.E."/>
            <person name="Ambesi-Impiombato A."/>
            <person name="Apweiler R."/>
            <person name="Aturaliya R.N."/>
            <person name="Bailey T.L."/>
            <person name="Bansal M."/>
            <person name="Baxter L."/>
            <person name="Beisel K.W."/>
            <person name="Bersano T."/>
            <person name="Bono H."/>
            <person name="Chalk A.M."/>
            <person name="Chiu K.P."/>
            <person name="Choudhary V."/>
            <person name="Christoffels A."/>
            <person name="Clutterbuck D.R."/>
            <person name="Crowe M.L."/>
            <person name="Dalla E."/>
            <person name="Dalrymple B.P."/>
            <person name="de Bono B."/>
            <person name="Della Gatta G."/>
            <person name="di Bernardo D."/>
            <person name="Down T."/>
            <person name="Engstrom P."/>
            <person name="Fagiolini M."/>
            <person name="Faulkner G."/>
            <person name="Fletcher C.F."/>
            <person name="Fukushima T."/>
            <person name="Furuno M."/>
            <person name="Futaki S."/>
            <person name="Gariboldi M."/>
            <person name="Georgii-Hemming P."/>
            <person name="Gingeras T.R."/>
            <person name="Gojobori T."/>
            <person name="Green R.E."/>
            <person name="Gustincich S."/>
            <person name="Harbers M."/>
            <person name="Hayashi Y."/>
            <person name="Hensch T.K."/>
            <person name="Hirokawa N."/>
            <person name="Hill D."/>
            <person name="Huminiecki L."/>
            <person name="Iacono M."/>
            <person name="Ikeo K."/>
            <person name="Iwama A."/>
            <person name="Ishikawa T."/>
            <person name="Jakt M."/>
            <person name="Kanapin A."/>
            <person name="Katoh M."/>
            <person name="Kawasawa Y."/>
            <person name="Kelso J."/>
            <person name="Kitamura H."/>
            <person name="Kitano H."/>
            <person name="Kollias G."/>
            <person name="Krishnan S.P."/>
            <person name="Kruger A."/>
            <person name="Kummerfeld S.K."/>
            <person name="Kurochkin I.V."/>
            <person name="Lareau L.F."/>
            <person name="Lazarevic D."/>
            <person name="Lipovich L."/>
            <person name="Liu J."/>
            <person name="Liuni S."/>
            <person name="McWilliam S."/>
            <person name="Madan Babu M."/>
            <person name="Madera M."/>
            <person name="Marchionni L."/>
            <person name="Matsuda H."/>
            <person name="Matsuzawa S."/>
            <person name="Miki H."/>
            <person name="Mignone F."/>
            <person name="Miyake S."/>
            <person name="Morris K."/>
            <person name="Mottagui-Tabar S."/>
            <person name="Mulder N."/>
            <person name="Nakano N."/>
            <person name="Nakauchi H."/>
            <person name="Ng P."/>
            <person name="Nilsson R."/>
            <person name="Nishiguchi S."/>
            <person name="Nishikawa S."/>
            <person name="Nori F."/>
            <person name="Ohara O."/>
            <person name="Okazaki Y."/>
            <person name="Orlando V."/>
            <person name="Pang K.C."/>
            <person name="Pavan W.J."/>
            <person name="Pavesi G."/>
            <person name="Pesole G."/>
            <person name="Petrovsky N."/>
            <person name="Piazza S."/>
            <person name="Reed J."/>
            <person name="Reid J.F."/>
            <person name="Ring B.Z."/>
            <person name="Ringwald M."/>
            <person name="Rost B."/>
            <person name="Ruan Y."/>
            <person name="Salzberg S.L."/>
            <person name="Sandelin A."/>
            <person name="Schneider C."/>
            <person name="Schoenbach C."/>
            <person name="Sekiguchi K."/>
            <person name="Semple C.A."/>
            <person name="Seno S."/>
            <person name="Sessa L."/>
            <person name="Sheng Y."/>
            <person name="Shibata Y."/>
            <person name="Shimada H."/>
            <person name="Shimada K."/>
            <person name="Silva D."/>
            <person name="Sinclair B."/>
            <person name="Sperling S."/>
            <person name="Stupka E."/>
            <person name="Sugiura K."/>
            <person name="Sultana R."/>
            <person name="Takenaka Y."/>
            <person name="Taki K."/>
            <person name="Tammoja K."/>
            <person name="Tan S.L."/>
            <person name="Tang S."/>
            <person name="Taylor M.S."/>
            <person name="Tegner J."/>
            <person name="Teichmann S.A."/>
            <person name="Ueda H.R."/>
            <person name="van Nimwegen E."/>
            <person name="Verardo R."/>
            <person name="Wei C.L."/>
            <person name="Yagi K."/>
            <person name="Yamanishi H."/>
            <person name="Zabarovsky E."/>
            <person name="Zhu S."/>
            <person name="Zimmer A."/>
            <person name="Hide W."/>
            <person name="Bult C."/>
            <person name="Grimmond S.M."/>
            <person name="Teasdale R.D."/>
            <person name="Liu E.T."/>
            <person name="Brusic V."/>
            <person name="Quackenbush J."/>
            <person name="Wahlestedt C."/>
            <person name="Mattick J.S."/>
            <person name="Hume D.A."/>
            <person name="Kai C."/>
            <person name="Sasaki D."/>
            <person name="Tomaru Y."/>
            <person name="Fukuda S."/>
            <person name="Kanamori-Katayama M."/>
            <person name="Suzuki M."/>
            <person name="Aoki J."/>
            <person name="Arakawa T."/>
            <person name="Iida J."/>
            <person name="Imamura K."/>
            <person name="Itoh M."/>
            <person name="Kato T."/>
            <person name="Kawaji H."/>
            <person name="Kawagashira N."/>
            <person name="Kawashima T."/>
            <person name="Kojima M."/>
            <person name="Kondo S."/>
            <person name="Konno H."/>
            <person name="Nakano K."/>
            <person name="Ninomiya N."/>
            <person name="Nishio T."/>
            <person name="Okada M."/>
            <person name="Plessy C."/>
            <person name="Shibata K."/>
            <person name="Shiraki T."/>
            <person name="Suzuki S."/>
            <person name="Tagami M."/>
            <person name="Waki K."/>
            <person name="Watahiki A."/>
            <person name="Okamura-Oho Y."/>
            <person name="Suzuki H."/>
            <person name="Kawai J."/>
            <person name="Hayashizaki Y."/>
        </authorList>
    </citation>
    <scope>NUCLEOTIDE SEQUENCE [LARGE SCALE MRNA] (ISOFORMS 1; 3 AND 5)</scope>
    <source>
        <strain>NOD</strain>
        <tissue>Olfactory bulb</tissue>
        <tissue>Thymus</tissue>
    </source>
</reference>
<reference key="3">
    <citation type="journal article" date="2004" name="Genome Res.">
        <title>The status, quality, and expansion of the NIH full-length cDNA project: the Mammalian Gene Collection (MGC).</title>
        <authorList>
            <consortium name="The MGC Project Team"/>
        </authorList>
    </citation>
    <scope>NUCLEOTIDE SEQUENCE [LARGE SCALE MRNA] (ISOFORM 2)</scope>
    <source>
        <tissue>Mammary tumor</tissue>
        <tissue>Olfactory epithelium</tissue>
    </source>
</reference>
<reference key="4">
    <citation type="journal article" date="2003" name="FEBS Lett.">
        <title>Expression of the VRK (vaccinia-related kinase) gene family of p53 regulators in murine hematopoietic development.</title>
        <authorList>
            <person name="Vega F.M."/>
            <person name="Gonzalo P."/>
            <person name="Gaspar M.L."/>
            <person name="Lazo P.A."/>
        </authorList>
    </citation>
    <scope>TISSUE SPECIFICITY</scope>
    <scope>DEVELOPMENTAL STAGE</scope>
</reference>
<reference key="5">
    <citation type="journal article" date="2004" name="J. Biol. Chem.">
        <title>Characterization of three paralogous members of the Mammalian vaccinia related kinase family.</title>
        <authorList>
            <person name="Nichols R.J."/>
            <person name="Traktman P."/>
        </authorList>
    </citation>
    <scope>FUNCTION</scope>
    <scope>SUBCELLULAR LOCATION</scope>
    <scope>PHOSPHORYLATION</scope>
</reference>
<reference key="6">
    <citation type="journal article" date="2010" name="Cell">
        <title>A tissue-specific atlas of mouse protein phosphorylation and expression.</title>
        <authorList>
            <person name="Huttlin E.L."/>
            <person name="Jedrychowski M.P."/>
            <person name="Elias J.E."/>
            <person name="Goswami T."/>
            <person name="Rad R."/>
            <person name="Beausoleil S.A."/>
            <person name="Villen J."/>
            <person name="Haas W."/>
            <person name="Sowa M.E."/>
            <person name="Gygi S.P."/>
        </authorList>
    </citation>
    <scope>IDENTIFICATION BY MASS SPECTROMETRY [LARGE SCALE ANALYSIS]</scope>
    <source>
        <tissue>Pancreas</tissue>
        <tissue>Spleen</tissue>
    </source>
</reference>
<reference key="7">
    <citation type="journal article" date="2015" name="J. Neurosci.">
        <title>The spinal muscular atrophy with pontocerebellar hypoplasia gene VRK1 regulates neuronal migration through an amyloid-beta precursor protein-dependent mechanism.</title>
        <authorList>
            <person name="Vinograd-Byk H."/>
            <person name="Sapir T."/>
            <person name="Cantarero L."/>
            <person name="Lazo P.A."/>
            <person name="Zeligson S."/>
            <person name="Lev D."/>
            <person name="Lerman-Sagie T."/>
            <person name="Renbaum P."/>
            <person name="Reiner O."/>
            <person name="Levy-Lahad E."/>
        </authorList>
    </citation>
    <scope>FUNCTION</scope>
    <scope>DISRUPTION PHENOTYPE</scope>
</reference>
<reference key="8">
    <citation type="journal article" date="2019" name="Sci. Rep.">
        <title>VRK1 functional insufficiency due to alterations in protein stability or kinase activity of human VRK1 pathogenic variants implicated in neuromotor syndromes.</title>
        <authorList>
            <person name="Martin-Doncel E."/>
            <person name="Rojas A.M."/>
            <person name="Cantarero L."/>
            <person name="Lazo P.A."/>
        </authorList>
    </citation>
    <scope>MUTAGENESIS OF GLY-135 AND LYS-179</scope>
</reference>
<reference key="9">
    <citation type="journal article" date="2020" name="Ann. Clin. Transl. Neurol.">
        <title>VRK1 (Y213H) homozygous mutant impairs Cajal bodies in a hereditary case of distal motor neuropathy.</title>
        <authorList>
            <person name="Marcos A.T."/>
            <person name="Martin-Doncel E."/>
            <person name="Morejon-Garcia P."/>
            <person name="Marcos-Alcalde I."/>
            <person name="Gomez-Puertas P."/>
            <person name="Segura-Puimedon M."/>
            <person name="Armengol L."/>
            <person name="Navarro-Pando J.M."/>
            <person name="Lazo P.A."/>
        </authorList>
    </citation>
    <scope>MUTAGENESIS OF TYR-213</scope>
</reference>
<reference key="10">
    <citation type="journal article" date="2020" name="Cancers">
        <title>VRK1 phosphorylates Tip60/KAT5 and is required for H4K16 acetylation in response to DNA Damage.</title>
        <authorList>
            <person name="Garcia-Gonzalez R."/>
            <person name="Morejon-Garcia P."/>
            <person name="Campillo-Marcos I."/>
            <person name="Salzano M."/>
            <person name="Lazo P.A."/>
        </authorList>
    </citation>
    <scope>FUNCTION</scope>
    <scope>MUTAGENESIS OF LYS-179</scope>
</reference>
<reference key="11">
    <citation type="journal article" date="2021" name="Neurol. Genet.">
        <title>Dysfunctional Homozygous VRK1-D263G Variant Impairs the Assembly of Cajal Bodies and DNA Damage Response in Hereditary Spastic Paraplegia.</title>
        <authorList>
            <person name="Morejon-Garcia P."/>
            <person name="Keren B."/>
            <person name="Marcos-Alcalde I."/>
            <person name="Gomez-Puertas P."/>
            <person name="Mochel F."/>
            <person name="Lazo P.A."/>
        </authorList>
    </citation>
    <scope>MUTAGENESIS OF LYS-179 AND ASP-263</scope>
</reference>
<sequence>MPRVKAAQAGRPGPAKRRLAEQFAAGEVLTDMSRKEWKLGLPIGQGGFGCIYLADTNSSKPVGSDAPCVVKVEPSDNGPLFTELKFYQRAAKPEQIQKWIRTHKLKYLGVPKYWGSGLHDKNGKSYRFMIMDRFGSDLQKIYEANAKRFSRKTVLQLSLRILDILEYIHEHEYVHGDIKASNLLLSHKNPDQVYLVDYGLAYRYCPDGVHKEYKEDPKRCHDGTLEFTSIDAHKGVAPSRRGDLEILGYCMIQWLSGCLPWEDNLKDPNYVRDSKIRYRDNVAALMEKCFPEKNKPGEIAKYMESVKLLEYTEKPLYQNLRDILLQGLKAIGSKDDGKLDFSAVENGSVKTRPASKKRKKEAEESAVCAVEDMECSDTQVQEAAQTRSVESQGAIHGSMSQPAAGCSSSDSSRRQQHLGLEQDMLRLDRRGSRTRKKAQK</sequence>
<name>VRK1_MOUSE</name>
<comment type="function">
    <text evidence="1 6 7 10 12">Serine/threonine kinase involved in the regulation of key cellular processes including the cell cycle, nuclear condensation, transcription regulation, and DNA damage response (PubMed:14645249, PubMed:33076429, PubMed:9521809). Controls chromatin organization and remodeling by mediating phosphorylation of histone H3 on 'Thr-4' and histone H2AX (H2aXT4ph) (By similarity). It also phosphorylates KAT5 in response to DNA damage, promoting KAT5 association with chromatin and histone acetyltransferase activity (PubMed:33076429). Is involved in the regulation of cell cycle progression of neural progenitors, and is required for proper cortical neuronal migration (PubMed:25609612). Is involved in neurite elongation and branching in motor neurons, and has an essential role in Cajal bodies assembly, acting through COIL phosphorylation and the control of coilin degradation (By similarity). Involved in Golgi disassembly during the cell cycle: following phosphorylation by PLK3 during mitosis, required to induce Golgi fragmentation (By similarity). Phosphorylates BANF1: disrupts its ability to bind DNA, reduces its binding to LEM domain-containing proteins and causes its relocalization from the nucleus to the cytoplasm (By similarity). Phosphorylates TP53BP1 and p53/TP53 on 'Thr-18', preventing the interaction between p53/TP53 and MDM2 (By similarity). Phosphorylates ATF2 which activates its transcriptional activity (By similarity). Phosphorylates JUN (By similarity).</text>
</comment>
<comment type="catalytic activity">
    <reaction evidence="6">
        <text>L-seryl-[protein] + ATP = O-phospho-L-seryl-[protein] + ADP + H(+)</text>
        <dbReference type="Rhea" id="RHEA:17989"/>
        <dbReference type="Rhea" id="RHEA-COMP:9863"/>
        <dbReference type="Rhea" id="RHEA-COMP:11604"/>
        <dbReference type="ChEBI" id="CHEBI:15378"/>
        <dbReference type="ChEBI" id="CHEBI:29999"/>
        <dbReference type="ChEBI" id="CHEBI:30616"/>
        <dbReference type="ChEBI" id="CHEBI:83421"/>
        <dbReference type="ChEBI" id="CHEBI:456216"/>
        <dbReference type="EC" id="2.7.11.1"/>
    </reaction>
</comment>
<comment type="catalytic activity">
    <reaction evidence="6">
        <text>L-threonyl-[protein] + ATP = O-phospho-L-threonyl-[protein] + ADP + H(+)</text>
        <dbReference type="Rhea" id="RHEA:46608"/>
        <dbReference type="Rhea" id="RHEA-COMP:11060"/>
        <dbReference type="Rhea" id="RHEA-COMP:11605"/>
        <dbReference type="ChEBI" id="CHEBI:15378"/>
        <dbReference type="ChEBI" id="CHEBI:30013"/>
        <dbReference type="ChEBI" id="CHEBI:30616"/>
        <dbReference type="ChEBI" id="CHEBI:61977"/>
        <dbReference type="ChEBI" id="CHEBI:456216"/>
        <dbReference type="EC" id="2.7.11.1"/>
    </reaction>
</comment>
<comment type="activity regulation">
    <text evidence="1">Active in presence of Mn(2+), Mg(2+) and Zn(2+), but is not functional with Ca(2+) or Cu(2+). Has a higher affinity for Mn(2+) than for Mg(2+). RAN inhibits its autophosphorylation and its ability to phosphorylate histone H3 (By similarity).</text>
</comment>
<comment type="subunit">
    <text evidence="1">Interacts with HDAC1, KAT2B, SETDB1, KDM3A and KDM4A (By similarity). Associates with the nucleosome through interactions with nucleosome DNA, histone H2A and histone H2B; the interaction with H2A and H2B is mediated by the nucleosome acidic patch, a cluster of negatively charged residues of H2A and H2B forming a cleft within the nucleosome core.</text>
</comment>
<comment type="subcellular location">
    <subcellularLocation>
        <location evidence="6 12">Nucleus</location>
    </subcellularLocation>
    <subcellularLocation>
        <location evidence="1">Cytoplasm</location>
    </subcellularLocation>
    <subcellularLocation>
        <location evidence="1">Nucleus</location>
        <location evidence="1">Cajal body</location>
    </subcellularLocation>
    <text evidence="1">Enriched on chromatin during mitotic chromatin condensation.</text>
</comment>
<comment type="alternative products">
    <event type="alternative splicing"/>
    <isoform>
        <id>Q80X41-1</id>
        <name>1</name>
        <name>L</name>
        <sequence type="displayed"/>
    </isoform>
    <isoform>
        <id>Q80X41-2</id>
        <name>2</name>
        <sequence type="described" ref="VSP_008529"/>
    </isoform>
    <isoform>
        <id>Q80X41-3</id>
        <name>3</name>
        <name>S</name>
        <sequence type="described" ref="VSP_008532"/>
    </isoform>
    <isoform>
        <id>Q80X41-5</id>
        <name>5</name>
        <sequence type="described" ref="VSP_008528 VSP_008532"/>
    </isoform>
</comment>
<comment type="tissue specificity">
    <text evidence="5 12">Highly expressed in testis. Expressed in liver, kidney and muscle. Weakly expressed in thymus, bone marrow and spleen.</text>
</comment>
<comment type="developmental stage">
    <text evidence="5">Expressed from 10.5 dpc to 14 dpc in developing liver and then decreases. It increases again from 17.5 dpc and remains thereafter. Highly expressed in hematopoietic embryonic tissues from 10.5 dpc to 14.5 dpc. Weakly expressed in the yolk-sac.</text>
</comment>
<comment type="PTM">
    <text evidence="1 6">Autophosphorylated at various serine and threonine residues (PubMed:14645249). Autophosphorylation does not impair its ability to phosphorylate p53/TP53 (By similarity). Phosphorylation by PLK3 leads to induction of Golgi fragmentation during mitosis (By similarity).</text>
</comment>
<comment type="disruption phenotype">
    <text evidence="7">VRK1 knockdown significantly impairs cortical neuronal migration, and affects the cell cycle of neuronal progenitors.</text>
</comment>
<comment type="similarity">
    <text evidence="17">Belongs to the protein kinase superfamily. CK1 Ser/Thr protein kinase family. VRK subfamily.</text>
</comment>
<evidence type="ECO:0000250" key="1">
    <source>
        <dbReference type="UniProtKB" id="Q99986"/>
    </source>
</evidence>
<evidence type="ECO:0000255" key="2">
    <source>
        <dbReference type="PROSITE-ProRule" id="PRU00159"/>
    </source>
</evidence>
<evidence type="ECO:0000255" key="3">
    <source>
        <dbReference type="PROSITE-ProRule" id="PRU10027"/>
    </source>
</evidence>
<evidence type="ECO:0000256" key="4">
    <source>
        <dbReference type="SAM" id="MobiDB-lite"/>
    </source>
</evidence>
<evidence type="ECO:0000269" key="5">
    <source>
    </source>
</evidence>
<evidence type="ECO:0000269" key="6">
    <source>
    </source>
</evidence>
<evidence type="ECO:0000269" key="7">
    <source>
    </source>
</evidence>
<evidence type="ECO:0000269" key="8">
    <source>
    </source>
</evidence>
<evidence type="ECO:0000269" key="9">
    <source>
    </source>
</evidence>
<evidence type="ECO:0000269" key="10">
    <source>
    </source>
</evidence>
<evidence type="ECO:0000269" key="11">
    <source>
    </source>
</evidence>
<evidence type="ECO:0000269" key="12">
    <source>
    </source>
</evidence>
<evidence type="ECO:0000303" key="13">
    <source>
    </source>
</evidence>
<evidence type="ECO:0000303" key="14">
    <source>
    </source>
</evidence>
<evidence type="ECO:0000303" key="15">
    <source>
    </source>
</evidence>
<evidence type="ECO:0000303" key="16">
    <source>
    </source>
</evidence>
<evidence type="ECO:0000305" key="17"/>
<evidence type="ECO:0000312" key="18">
    <source>
        <dbReference type="MGI" id="MGI:1261847"/>
    </source>
</evidence>
<proteinExistence type="evidence at protein level"/>
<organism>
    <name type="scientific">Mus musculus</name>
    <name type="common">Mouse</name>
    <dbReference type="NCBI Taxonomy" id="10090"/>
    <lineage>
        <taxon>Eukaryota</taxon>
        <taxon>Metazoa</taxon>
        <taxon>Chordata</taxon>
        <taxon>Craniata</taxon>
        <taxon>Vertebrata</taxon>
        <taxon>Euteleostomi</taxon>
        <taxon>Mammalia</taxon>
        <taxon>Eutheria</taxon>
        <taxon>Euarchontoglires</taxon>
        <taxon>Glires</taxon>
        <taxon>Rodentia</taxon>
        <taxon>Myomorpha</taxon>
        <taxon>Muroidea</taxon>
        <taxon>Muridae</taxon>
        <taxon>Murinae</taxon>
        <taxon>Mus</taxon>
        <taxon>Mus</taxon>
    </lineage>
</organism>